<protein>
    <recommendedName>
        <fullName evidence="1">Large ribosomal subunit protein bL33</fullName>
    </recommendedName>
    <alternativeName>
        <fullName evidence="2">50S ribosomal protein L33</fullName>
    </alternativeName>
</protein>
<proteinExistence type="inferred from homology"/>
<name>RL33_CLASE</name>
<sequence length="55" mass="6588">MAKQQDVRPIIKLRSTAGTGYTYVTRKNRRNNPDRLVLKKYDPVVRTHVDFREER</sequence>
<reference key="1">
    <citation type="journal article" date="2008" name="J. Bacteriol.">
        <title>Genome of the actinomycete plant pathogen Clavibacter michiganensis subsp. sepedonicus suggests recent niche adaptation.</title>
        <authorList>
            <person name="Bentley S.D."/>
            <person name="Corton C."/>
            <person name="Brown S.E."/>
            <person name="Barron A."/>
            <person name="Clark L."/>
            <person name="Doggett J."/>
            <person name="Harris B."/>
            <person name="Ormond D."/>
            <person name="Quail M.A."/>
            <person name="May G."/>
            <person name="Francis D."/>
            <person name="Knudson D."/>
            <person name="Parkhill J."/>
            <person name="Ishimaru C.A."/>
        </authorList>
    </citation>
    <scope>NUCLEOTIDE SEQUENCE [LARGE SCALE GENOMIC DNA]</scope>
    <source>
        <strain>ATCC 33113 / DSM 20744 / JCM 9667 / LMG 2889 / ICMP 2535 / C-1</strain>
    </source>
</reference>
<keyword id="KW-0687">Ribonucleoprotein</keyword>
<keyword id="KW-0689">Ribosomal protein</keyword>
<organism>
    <name type="scientific">Clavibacter sepedonicus</name>
    <name type="common">Clavibacter michiganensis subsp. sepedonicus</name>
    <dbReference type="NCBI Taxonomy" id="31964"/>
    <lineage>
        <taxon>Bacteria</taxon>
        <taxon>Bacillati</taxon>
        <taxon>Actinomycetota</taxon>
        <taxon>Actinomycetes</taxon>
        <taxon>Micrococcales</taxon>
        <taxon>Microbacteriaceae</taxon>
        <taxon>Clavibacter</taxon>
    </lineage>
</organism>
<evidence type="ECO:0000255" key="1">
    <source>
        <dbReference type="HAMAP-Rule" id="MF_00294"/>
    </source>
</evidence>
<evidence type="ECO:0000305" key="2"/>
<accession>B0RDL0</accession>
<gene>
    <name evidence="1" type="primary">rpmG</name>
    <name type="ordered locus">CMS3071</name>
</gene>
<comment type="similarity">
    <text evidence="1">Belongs to the bacterial ribosomal protein bL33 family.</text>
</comment>
<dbReference type="EMBL" id="AM849034">
    <property type="protein sequence ID" value="CAQ03139.1"/>
    <property type="molecule type" value="Genomic_DNA"/>
</dbReference>
<dbReference type="RefSeq" id="WP_012300279.1">
    <property type="nucleotide sequence ID" value="NZ_MZMN01000003.1"/>
</dbReference>
<dbReference type="SMR" id="B0RDL0"/>
<dbReference type="STRING" id="31964.CMS3071"/>
<dbReference type="KEGG" id="cms:CMS3071"/>
<dbReference type="eggNOG" id="COG0267">
    <property type="taxonomic scope" value="Bacteria"/>
</dbReference>
<dbReference type="HOGENOM" id="CLU_190949_1_1_11"/>
<dbReference type="OrthoDB" id="21586at2"/>
<dbReference type="Proteomes" id="UP000001318">
    <property type="component" value="Chromosome"/>
</dbReference>
<dbReference type="GO" id="GO:0022625">
    <property type="term" value="C:cytosolic large ribosomal subunit"/>
    <property type="evidence" value="ECO:0007669"/>
    <property type="project" value="TreeGrafter"/>
</dbReference>
<dbReference type="GO" id="GO:0003735">
    <property type="term" value="F:structural constituent of ribosome"/>
    <property type="evidence" value="ECO:0007669"/>
    <property type="project" value="InterPro"/>
</dbReference>
<dbReference type="GO" id="GO:0006412">
    <property type="term" value="P:translation"/>
    <property type="evidence" value="ECO:0007669"/>
    <property type="project" value="UniProtKB-UniRule"/>
</dbReference>
<dbReference type="FunFam" id="2.20.28.120:FF:000002">
    <property type="entry name" value="50S ribosomal protein L33"/>
    <property type="match status" value="1"/>
</dbReference>
<dbReference type="Gene3D" id="2.20.28.120">
    <property type="entry name" value="Ribosomal protein L33"/>
    <property type="match status" value="1"/>
</dbReference>
<dbReference type="HAMAP" id="MF_00294">
    <property type="entry name" value="Ribosomal_bL33"/>
    <property type="match status" value="1"/>
</dbReference>
<dbReference type="InterPro" id="IPR001705">
    <property type="entry name" value="Ribosomal_bL33"/>
</dbReference>
<dbReference type="InterPro" id="IPR018264">
    <property type="entry name" value="Ribosomal_bL33_CS"/>
</dbReference>
<dbReference type="InterPro" id="IPR038584">
    <property type="entry name" value="Ribosomal_bL33_sf"/>
</dbReference>
<dbReference type="InterPro" id="IPR011332">
    <property type="entry name" value="Ribosomal_zn-bd"/>
</dbReference>
<dbReference type="NCBIfam" id="NF001860">
    <property type="entry name" value="PRK00595.1"/>
    <property type="match status" value="1"/>
</dbReference>
<dbReference type="NCBIfam" id="TIGR01023">
    <property type="entry name" value="rpmG_bact"/>
    <property type="match status" value="1"/>
</dbReference>
<dbReference type="PANTHER" id="PTHR15238">
    <property type="entry name" value="54S RIBOSOMAL PROTEIN L39, MITOCHONDRIAL"/>
    <property type="match status" value="1"/>
</dbReference>
<dbReference type="PANTHER" id="PTHR15238:SF1">
    <property type="entry name" value="LARGE RIBOSOMAL SUBUNIT PROTEIN BL33M"/>
    <property type="match status" value="1"/>
</dbReference>
<dbReference type="Pfam" id="PF00471">
    <property type="entry name" value="Ribosomal_L33"/>
    <property type="match status" value="1"/>
</dbReference>
<dbReference type="SUPFAM" id="SSF57829">
    <property type="entry name" value="Zn-binding ribosomal proteins"/>
    <property type="match status" value="1"/>
</dbReference>
<dbReference type="PROSITE" id="PS00582">
    <property type="entry name" value="RIBOSOMAL_L33"/>
    <property type="match status" value="1"/>
</dbReference>
<feature type="chain" id="PRO_1000078909" description="Large ribosomal subunit protein bL33">
    <location>
        <begin position="1"/>
        <end position="55"/>
    </location>
</feature>